<keyword id="KW-1267">Proteomics identification</keyword>
<keyword id="KW-1185">Reference proteome</keyword>
<keyword id="KW-0825">Tumor antigen</keyword>
<feature type="chain" id="PRO_0000156718" description="Melanoma-associated antigen B10">
    <location>
        <begin position="1"/>
        <end position="347"/>
    </location>
</feature>
<feature type="domain" description="MAGE" evidence="1">
    <location>
        <begin position="111"/>
        <end position="310"/>
    </location>
</feature>
<feature type="region of interest" description="Disordered" evidence="2">
    <location>
        <begin position="1"/>
        <end position="20"/>
    </location>
</feature>
<feature type="region of interest" description="Disordered" evidence="2">
    <location>
        <begin position="56"/>
        <end position="92"/>
    </location>
</feature>
<feature type="region of interest" description="Disordered" evidence="2">
    <location>
        <begin position="328"/>
        <end position="347"/>
    </location>
</feature>
<feature type="compositionally biased region" description="Basic residues" evidence="2">
    <location>
        <begin position="1"/>
        <end position="18"/>
    </location>
</feature>
<feature type="compositionally biased region" description="Low complexity" evidence="2">
    <location>
        <begin position="67"/>
        <end position="78"/>
    </location>
</feature>
<feature type="compositionally biased region" description="Basic and acidic residues" evidence="2">
    <location>
        <begin position="81"/>
        <end position="92"/>
    </location>
</feature>
<feature type="sequence variant" id="VAR_054500" description="In dbSNP:rs1368769." evidence="3 4">
    <original>F</original>
    <variation>S</variation>
    <location>
        <position position="50"/>
    </location>
</feature>
<feature type="sequence variant" id="VAR_026773" description="In dbSNP:rs12557898." evidence="3 4">
    <original>R</original>
    <variation>Q</variation>
    <location>
        <position position="65"/>
    </location>
</feature>
<feature type="sequence conflict" description="In Ref. 1; BAB71522." evidence="5" ref="1">
    <original>K</original>
    <variation>E</variation>
    <location>
        <position position="6"/>
    </location>
</feature>
<feature type="sequence conflict" description="In Ref. 1; BAB71522." evidence="5" ref="1">
    <original>Q</original>
    <variation>R</variation>
    <location>
        <position position="68"/>
    </location>
</feature>
<feature type="sequence conflict" description="In Ref. 1; BAB71522." evidence="5" ref="1">
    <original>F</original>
    <variation>L</variation>
    <location>
        <position position="164"/>
    </location>
</feature>
<reference key="1">
    <citation type="journal article" date="2004" name="Nat. Genet.">
        <title>Complete sequencing and characterization of 21,243 full-length human cDNAs.</title>
        <authorList>
            <person name="Ota T."/>
            <person name="Suzuki Y."/>
            <person name="Nishikawa T."/>
            <person name="Otsuki T."/>
            <person name="Sugiyama T."/>
            <person name="Irie R."/>
            <person name="Wakamatsu A."/>
            <person name="Hayashi K."/>
            <person name="Sato H."/>
            <person name="Nagai K."/>
            <person name="Kimura K."/>
            <person name="Makita H."/>
            <person name="Sekine M."/>
            <person name="Obayashi M."/>
            <person name="Nishi T."/>
            <person name="Shibahara T."/>
            <person name="Tanaka T."/>
            <person name="Ishii S."/>
            <person name="Yamamoto J."/>
            <person name="Saito K."/>
            <person name="Kawai Y."/>
            <person name="Isono Y."/>
            <person name="Nakamura Y."/>
            <person name="Nagahari K."/>
            <person name="Murakami K."/>
            <person name="Yasuda T."/>
            <person name="Iwayanagi T."/>
            <person name="Wagatsuma M."/>
            <person name="Shiratori A."/>
            <person name="Sudo H."/>
            <person name="Hosoiri T."/>
            <person name="Kaku Y."/>
            <person name="Kodaira H."/>
            <person name="Kondo H."/>
            <person name="Sugawara M."/>
            <person name="Takahashi M."/>
            <person name="Kanda K."/>
            <person name="Yokoi T."/>
            <person name="Furuya T."/>
            <person name="Kikkawa E."/>
            <person name="Omura Y."/>
            <person name="Abe K."/>
            <person name="Kamihara K."/>
            <person name="Katsuta N."/>
            <person name="Sato K."/>
            <person name="Tanikawa M."/>
            <person name="Yamazaki M."/>
            <person name="Ninomiya K."/>
            <person name="Ishibashi T."/>
            <person name="Yamashita H."/>
            <person name="Murakawa K."/>
            <person name="Fujimori K."/>
            <person name="Tanai H."/>
            <person name="Kimata M."/>
            <person name="Watanabe M."/>
            <person name="Hiraoka S."/>
            <person name="Chiba Y."/>
            <person name="Ishida S."/>
            <person name="Ono Y."/>
            <person name="Takiguchi S."/>
            <person name="Watanabe S."/>
            <person name="Yosida M."/>
            <person name="Hotuta T."/>
            <person name="Kusano J."/>
            <person name="Kanehori K."/>
            <person name="Takahashi-Fujii A."/>
            <person name="Hara H."/>
            <person name="Tanase T.-O."/>
            <person name="Nomura Y."/>
            <person name="Togiya S."/>
            <person name="Komai F."/>
            <person name="Hara R."/>
            <person name="Takeuchi K."/>
            <person name="Arita M."/>
            <person name="Imose N."/>
            <person name="Musashino K."/>
            <person name="Yuuki H."/>
            <person name="Oshima A."/>
            <person name="Sasaki N."/>
            <person name="Aotsuka S."/>
            <person name="Yoshikawa Y."/>
            <person name="Matsunawa H."/>
            <person name="Ichihara T."/>
            <person name="Shiohata N."/>
            <person name="Sano S."/>
            <person name="Moriya S."/>
            <person name="Momiyama H."/>
            <person name="Satoh N."/>
            <person name="Takami S."/>
            <person name="Terashima Y."/>
            <person name="Suzuki O."/>
            <person name="Nakagawa S."/>
            <person name="Senoh A."/>
            <person name="Mizoguchi H."/>
            <person name="Goto Y."/>
            <person name="Shimizu F."/>
            <person name="Wakebe H."/>
            <person name="Hishigaki H."/>
            <person name="Watanabe T."/>
            <person name="Sugiyama A."/>
            <person name="Takemoto M."/>
            <person name="Kawakami B."/>
            <person name="Yamazaki M."/>
            <person name="Watanabe K."/>
            <person name="Kumagai A."/>
            <person name="Itakura S."/>
            <person name="Fukuzumi Y."/>
            <person name="Fujimori Y."/>
            <person name="Komiyama M."/>
            <person name="Tashiro H."/>
            <person name="Tanigami A."/>
            <person name="Fujiwara T."/>
            <person name="Ono T."/>
            <person name="Yamada K."/>
            <person name="Fujii Y."/>
            <person name="Ozaki K."/>
            <person name="Hirao M."/>
            <person name="Ohmori Y."/>
            <person name="Kawabata A."/>
            <person name="Hikiji T."/>
            <person name="Kobatake N."/>
            <person name="Inagaki H."/>
            <person name="Ikema Y."/>
            <person name="Okamoto S."/>
            <person name="Okitani R."/>
            <person name="Kawakami T."/>
            <person name="Noguchi S."/>
            <person name="Itoh T."/>
            <person name="Shigeta K."/>
            <person name="Senba T."/>
            <person name="Matsumura K."/>
            <person name="Nakajima Y."/>
            <person name="Mizuno T."/>
            <person name="Morinaga M."/>
            <person name="Sasaki M."/>
            <person name="Togashi T."/>
            <person name="Oyama M."/>
            <person name="Hata H."/>
            <person name="Watanabe M."/>
            <person name="Komatsu T."/>
            <person name="Mizushima-Sugano J."/>
            <person name="Satoh T."/>
            <person name="Shirai Y."/>
            <person name="Takahashi Y."/>
            <person name="Nakagawa K."/>
            <person name="Okumura K."/>
            <person name="Nagase T."/>
            <person name="Nomura N."/>
            <person name="Kikuchi H."/>
            <person name="Masuho Y."/>
            <person name="Yamashita R."/>
            <person name="Nakai K."/>
            <person name="Yada T."/>
            <person name="Nakamura Y."/>
            <person name="Ohara O."/>
            <person name="Isogai T."/>
            <person name="Sugano S."/>
        </authorList>
    </citation>
    <scope>NUCLEOTIDE SEQUENCE [LARGE SCALE MRNA]</scope>
    <scope>VARIANTS SER-50 AND GLN-65</scope>
    <source>
        <tissue>Testis</tissue>
    </source>
</reference>
<reference key="2">
    <citation type="journal article" date="2005" name="Nature">
        <title>The DNA sequence of the human X chromosome.</title>
        <authorList>
            <person name="Ross M.T."/>
            <person name="Grafham D.V."/>
            <person name="Coffey A.J."/>
            <person name="Scherer S."/>
            <person name="McLay K."/>
            <person name="Muzny D."/>
            <person name="Platzer M."/>
            <person name="Howell G.R."/>
            <person name="Burrows C."/>
            <person name="Bird C.P."/>
            <person name="Frankish A."/>
            <person name="Lovell F.L."/>
            <person name="Howe K.L."/>
            <person name="Ashurst J.L."/>
            <person name="Fulton R.S."/>
            <person name="Sudbrak R."/>
            <person name="Wen G."/>
            <person name="Jones M.C."/>
            <person name="Hurles M.E."/>
            <person name="Andrews T.D."/>
            <person name="Scott C.E."/>
            <person name="Searle S."/>
            <person name="Ramser J."/>
            <person name="Whittaker A."/>
            <person name="Deadman R."/>
            <person name="Carter N.P."/>
            <person name="Hunt S.E."/>
            <person name="Chen R."/>
            <person name="Cree A."/>
            <person name="Gunaratne P."/>
            <person name="Havlak P."/>
            <person name="Hodgson A."/>
            <person name="Metzker M.L."/>
            <person name="Richards S."/>
            <person name="Scott G."/>
            <person name="Steffen D."/>
            <person name="Sodergren E."/>
            <person name="Wheeler D.A."/>
            <person name="Worley K.C."/>
            <person name="Ainscough R."/>
            <person name="Ambrose K.D."/>
            <person name="Ansari-Lari M.A."/>
            <person name="Aradhya S."/>
            <person name="Ashwell R.I."/>
            <person name="Babbage A.K."/>
            <person name="Bagguley C.L."/>
            <person name="Ballabio A."/>
            <person name="Banerjee R."/>
            <person name="Barker G.E."/>
            <person name="Barlow K.F."/>
            <person name="Barrett I.P."/>
            <person name="Bates K.N."/>
            <person name="Beare D.M."/>
            <person name="Beasley H."/>
            <person name="Beasley O."/>
            <person name="Beck A."/>
            <person name="Bethel G."/>
            <person name="Blechschmidt K."/>
            <person name="Brady N."/>
            <person name="Bray-Allen S."/>
            <person name="Bridgeman A.M."/>
            <person name="Brown A.J."/>
            <person name="Brown M.J."/>
            <person name="Bonnin D."/>
            <person name="Bruford E.A."/>
            <person name="Buhay C."/>
            <person name="Burch P."/>
            <person name="Burford D."/>
            <person name="Burgess J."/>
            <person name="Burrill W."/>
            <person name="Burton J."/>
            <person name="Bye J.M."/>
            <person name="Carder C."/>
            <person name="Carrel L."/>
            <person name="Chako J."/>
            <person name="Chapman J.C."/>
            <person name="Chavez D."/>
            <person name="Chen E."/>
            <person name="Chen G."/>
            <person name="Chen Y."/>
            <person name="Chen Z."/>
            <person name="Chinault C."/>
            <person name="Ciccodicola A."/>
            <person name="Clark S.Y."/>
            <person name="Clarke G."/>
            <person name="Clee C.M."/>
            <person name="Clegg S."/>
            <person name="Clerc-Blankenburg K."/>
            <person name="Clifford K."/>
            <person name="Cobley V."/>
            <person name="Cole C.G."/>
            <person name="Conquer J.S."/>
            <person name="Corby N."/>
            <person name="Connor R.E."/>
            <person name="David R."/>
            <person name="Davies J."/>
            <person name="Davis C."/>
            <person name="Davis J."/>
            <person name="Delgado O."/>
            <person name="Deshazo D."/>
            <person name="Dhami P."/>
            <person name="Ding Y."/>
            <person name="Dinh H."/>
            <person name="Dodsworth S."/>
            <person name="Draper H."/>
            <person name="Dugan-Rocha S."/>
            <person name="Dunham A."/>
            <person name="Dunn M."/>
            <person name="Durbin K.J."/>
            <person name="Dutta I."/>
            <person name="Eades T."/>
            <person name="Ellwood M."/>
            <person name="Emery-Cohen A."/>
            <person name="Errington H."/>
            <person name="Evans K.L."/>
            <person name="Faulkner L."/>
            <person name="Francis F."/>
            <person name="Frankland J."/>
            <person name="Fraser A.E."/>
            <person name="Galgoczy P."/>
            <person name="Gilbert J."/>
            <person name="Gill R."/>
            <person name="Gloeckner G."/>
            <person name="Gregory S.G."/>
            <person name="Gribble S."/>
            <person name="Griffiths C."/>
            <person name="Grocock R."/>
            <person name="Gu Y."/>
            <person name="Gwilliam R."/>
            <person name="Hamilton C."/>
            <person name="Hart E.A."/>
            <person name="Hawes A."/>
            <person name="Heath P.D."/>
            <person name="Heitmann K."/>
            <person name="Hennig S."/>
            <person name="Hernandez J."/>
            <person name="Hinzmann B."/>
            <person name="Ho S."/>
            <person name="Hoffs M."/>
            <person name="Howden P.J."/>
            <person name="Huckle E.J."/>
            <person name="Hume J."/>
            <person name="Hunt P.J."/>
            <person name="Hunt A.R."/>
            <person name="Isherwood J."/>
            <person name="Jacob L."/>
            <person name="Johnson D."/>
            <person name="Jones S."/>
            <person name="de Jong P.J."/>
            <person name="Joseph S.S."/>
            <person name="Keenan S."/>
            <person name="Kelly S."/>
            <person name="Kershaw J.K."/>
            <person name="Khan Z."/>
            <person name="Kioschis P."/>
            <person name="Klages S."/>
            <person name="Knights A.J."/>
            <person name="Kosiura A."/>
            <person name="Kovar-Smith C."/>
            <person name="Laird G.K."/>
            <person name="Langford C."/>
            <person name="Lawlor S."/>
            <person name="Leversha M."/>
            <person name="Lewis L."/>
            <person name="Liu W."/>
            <person name="Lloyd C."/>
            <person name="Lloyd D.M."/>
            <person name="Loulseged H."/>
            <person name="Loveland J.E."/>
            <person name="Lovell J.D."/>
            <person name="Lozado R."/>
            <person name="Lu J."/>
            <person name="Lyne R."/>
            <person name="Ma J."/>
            <person name="Maheshwari M."/>
            <person name="Matthews L.H."/>
            <person name="McDowall J."/>
            <person name="McLaren S."/>
            <person name="McMurray A."/>
            <person name="Meidl P."/>
            <person name="Meitinger T."/>
            <person name="Milne S."/>
            <person name="Miner G."/>
            <person name="Mistry S.L."/>
            <person name="Morgan M."/>
            <person name="Morris S."/>
            <person name="Mueller I."/>
            <person name="Mullikin J.C."/>
            <person name="Nguyen N."/>
            <person name="Nordsiek G."/>
            <person name="Nyakatura G."/>
            <person name="O'dell C.N."/>
            <person name="Okwuonu G."/>
            <person name="Palmer S."/>
            <person name="Pandian R."/>
            <person name="Parker D."/>
            <person name="Parrish J."/>
            <person name="Pasternak S."/>
            <person name="Patel D."/>
            <person name="Pearce A.V."/>
            <person name="Pearson D.M."/>
            <person name="Pelan S.E."/>
            <person name="Perez L."/>
            <person name="Porter K.M."/>
            <person name="Ramsey Y."/>
            <person name="Reichwald K."/>
            <person name="Rhodes S."/>
            <person name="Ridler K.A."/>
            <person name="Schlessinger D."/>
            <person name="Schueler M.G."/>
            <person name="Sehra H.K."/>
            <person name="Shaw-Smith C."/>
            <person name="Shen H."/>
            <person name="Sheridan E.M."/>
            <person name="Shownkeen R."/>
            <person name="Skuce C.D."/>
            <person name="Smith M.L."/>
            <person name="Sotheran E.C."/>
            <person name="Steingruber H.E."/>
            <person name="Steward C.A."/>
            <person name="Storey R."/>
            <person name="Swann R.M."/>
            <person name="Swarbreck D."/>
            <person name="Tabor P.E."/>
            <person name="Taudien S."/>
            <person name="Taylor T."/>
            <person name="Teague B."/>
            <person name="Thomas K."/>
            <person name="Thorpe A."/>
            <person name="Timms K."/>
            <person name="Tracey A."/>
            <person name="Trevanion S."/>
            <person name="Tromans A.C."/>
            <person name="d'Urso M."/>
            <person name="Verduzco D."/>
            <person name="Villasana D."/>
            <person name="Waldron L."/>
            <person name="Wall M."/>
            <person name="Wang Q."/>
            <person name="Warren J."/>
            <person name="Warry G.L."/>
            <person name="Wei X."/>
            <person name="West A."/>
            <person name="Whitehead S.L."/>
            <person name="Whiteley M.N."/>
            <person name="Wilkinson J.E."/>
            <person name="Willey D.L."/>
            <person name="Williams G."/>
            <person name="Williams L."/>
            <person name="Williamson A."/>
            <person name="Williamson H."/>
            <person name="Wilming L."/>
            <person name="Woodmansey R.L."/>
            <person name="Wray P.W."/>
            <person name="Yen J."/>
            <person name="Zhang J."/>
            <person name="Zhou J."/>
            <person name="Zoghbi H."/>
            <person name="Zorilla S."/>
            <person name="Buck D."/>
            <person name="Reinhardt R."/>
            <person name="Poustka A."/>
            <person name="Rosenthal A."/>
            <person name="Lehrach H."/>
            <person name="Meindl A."/>
            <person name="Minx P.J."/>
            <person name="Hillier L.W."/>
            <person name="Willard H.F."/>
            <person name="Wilson R.K."/>
            <person name="Waterston R.H."/>
            <person name="Rice C.M."/>
            <person name="Vaudin M."/>
            <person name="Coulson A."/>
            <person name="Nelson D.L."/>
            <person name="Weinstock G."/>
            <person name="Sulston J.E."/>
            <person name="Durbin R.M."/>
            <person name="Hubbard T."/>
            <person name="Gibbs R.A."/>
            <person name="Beck S."/>
            <person name="Rogers J."/>
            <person name="Bentley D.R."/>
        </authorList>
    </citation>
    <scope>NUCLEOTIDE SEQUENCE [LARGE SCALE GENOMIC DNA]</scope>
</reference>
<reference key="3">
    <citation type="journal article" date="2004" name="Genome Res.">
        <title>The status, quality, and expansion of the NIH full-length cDNA project: the Mammalian Gene Collection (MGC).</title>
        <authorList>
            <consortium name="The MGC Project Team"/>
        </authorList>
    </citation>
    <scope>NUCLEOTIDE SEQUENCE [LARGE SCALE MRNA]</scope>
    <scope>VARIANTS SER-50 AND GLN-65</scope>
</reference>
<reference key="4">
    <citation type="submission" date="2001-01" db="EMBL/GenBank/DDBJ databases">
        <title>Identification of new members of the MAGE gene family.</title>
        <authorList>
            <person name="Lucas S."/>
            <person name="Boon T."/>
        </authorList>
    </citation>
    <scope>NUCLEOTIDE SEQUENCE [GENOMIC DNA] OF 53-222</scope>
    <source>
        <tissue>Blood</tissue>
    </source>
</reference>
<gene>
    <name type="primary">MAGEB10</name>
</gene>
<proteinExistence type="evidence at protein level"/>
<sequence>MPRGQKSKLRAREKRRQARGGLEDLIDALDILEEEEESPPSASACLKDVFQSSLDGASNNPHGLREAQSTSTSATAASHTRHPEGVNDQMEERPICTQDLEATDSFPRGPVDEKVIILVHYLLYKYQMKEPITKADMLRNVTQMSKSQFPVILSRASEHLELIFGLDLKEVEPNKHIYVLVNKLDLGCDAKLSDETGVPKTGLLMTVLGIIFTNGNCVAEEEVWKVFNTMGLYDGIEHFMFGEPRKLLTKDLVKENYLEYQQVPNSDPPRYQFLWGPRAHAETSKMKVLEFLAKVNDTAPSEFSNWYTEALQDEEERARARVAAKARVSATAGARSKVKSSKSSQLQ</sequence>
<evidence type="ECO:0000255" key="1">
    <source>
        <dbReference type="PROSITE-ProRule" id="PRU00127"/>
    </source>
</evidence>
<evidence type="ECO:0000256" key="2">
    <source>
        <dbReference type="SAM" id="MobiDB-lite"/>
    </source>
</evidence>
<evidence type="ECO:0000269" key="3">
    <source>
    </source>
</evidence>
<evidence type="ECO:0000269" key="4">
    <source>
    </source>
</evidence>
<evidence type="ECO:0000305" key="5"/>
<name>MAGBA_HUMAN</name>
<accession>Q96LZ2</accession>
<accession>Q494Y6</accession>
<accession>Q494Y7</accession>
<accession>Q9BZ78</accession>
<dbReference type="EMBL" id="AK057527">
    <property type="protein sequence ID" value="BAB71522.1"/>
    <property type="molecule type" value="mRNA"/>
</dbReference>
<dbReference type="EMBL" id="AC107613">
    <property type="status" value="NOT_ANNOTATED_CDS"/>
    <property type="molecule type" value="Genomic_DNA"/>
</dbReference>
<dbReference type="EMBL" id="AC112492">
    <property type="status" value="NOT_ANNOTATED_CDS"/>
    <property type="molecule type" value="Genomic_DNA"/>
</dbReference>
<dbReference type="EMBL" id="BC101307">
    <property type="protein sequence ID" value="AAI01308.1"/>
    <property type="molecule type" value="mRNA"/>
</dbReference>
<dbReference type="EMBL" id="BC101308">
    <property type="protein sequence ID" value="AAI01309.1"/>
    <property type="molecule type" value="mRNA"/>
</dbReference>
<dbReference type="EMBL" id="BC101309">
    <property type="protein sequence ID" value="AAI01310.1"/>
    <property type="molecule type" value="mRNA"/>
</dbReference>
<dbReference type="EMBL" id="BC101310">
    <property type="protein sequence ID" value="AAI01311.1"/>
    <property type="molecule type" value="mRNA"/>
</dbReference>
<dbReference type="EMBL" id="AF333708">
    <property type="protein sequence ID" value="AAK00360.1"/>
    <property type="molecule type" value="Genomic_DNA"/>
</dbReference>
<dbReference type="CCDS" id="CCDS35221.1"/>
<dbReference type="RefSeq" id="NP_872312.2">
    <property type="nucleotide sequence ID" value="NM_182506.3"/>
</dbReference>
<dbReference type="SMR" id="Q96LZ2"/>
<dbReference type="BioGRID" id="126566">
    <property type="interactions" value="66"/>
</dbReference>
<dbReference type="FunCoup" id="Q96LZ2">
    <property type="interactions" value="70"/>
</dbReference>
<dbReference type="IntAct" id="Q96LZ2">
    <property type="interactions" value="66"/>
</dbReference>
<dbReference type="STRING" id="9606.ENSP00000368304"/>
<dbReference type="iPTMnet" id="Q96LZ2"/>
<dbReference type="PhosphoSitePlus" id="Q96LZ2"/>
<dbReference type="BioMuta" id="MAGEB10"/>
<dbReference type="DMDM" id="224471901"/>
<dbReference type="jPOST" id="Q96LZ2"/>
<dbReference type="MassIVE" id="Q96LZ2"/>
<dbReference type="PaxDb" id="9606-ENSP00000368304"/>
<dbReference type="PeptideAtlas" id="Q96LZ2"/>
<dbReference type="ProteomicsDB" id="77270"/>
<dbReference type="Pumba" id="Q96LZ2"/>
<dbReference type="Antibodypedia" id="397">
    <property type="antibodies" value="129 antibodies from 24 providers"/>
</dbReference>
<dbReference type="DNASU" id="139422"/>
<dbReference type="Ensembl" id="ENST00000356790.2">
    <property type="protein sequence ID" value="ENSP00000368304.1"/>
    <property type="gene ID" value="ENSG00000177689.10"/>
</dbReference>
<dbReference type="Ensembl" id="ENST00000614159.1">
    <property type="protein sequence ID" value="ENSP00000480889.1"/>
    <property type="gene ID" value="ENSG00000177689.10"/>
</dbReference>
<dbReference type="GeneID" id="139422"/>
<dbReference type="KEGG" id="hsa:139422"/>
<dbReference type="MANE-Select" id="ENST00000356790.2">
    <property type="protein sequence ID" value="ENSP00000368304.1"/>
    <property type="RefSeq nucleotide sequence ID" value="NM_182506.3"/>
    <property type="RefSeq protein sequence ID" value="NP_872312.2"/>
</dbReference>
<dbReference type="UCSC" id="uc004dbw.3">
    <property type="organism name" value="human"/>
</dbReference>
<dbReference type="AGR" id="HGNC:25377"/>
<dbReference type="CTD" id="139422"/>
<dbReference type="GeneCards" id="MAGEB10"/>
<dbReference type="HGNC" id="HGNC:25377">
    <property type="gene designation" value="MAGEB10"/>
</dbReference>
<dbReference type="HPA" id="ENSG00000177689">
    <property type="expression patterns" value="Tissue enriched (testis)"/>
</dbReference>
<dbReference type="MIM" id="300761">
    <property type="type" value="gene"/>
</dbReference>
<dbReference type="neXtProt" id="NX_Q96LZ2"/>
<dbReference type="PharmGKB" id="PA134952121"/>
<dbReference type="VEuPathDB" id="HostDB:ENSG00000177689"/>
<dbReference type="eggNOG" id="KOG4562">
    <property type="taxonomic scope" value="Eukaryota"/>
</dbReference>
<dbReference type="GeneTree" id="ENSGT00940000163797"/>
<dbReference type="HOGENOM" id="CLU_039582_1_0_1"/>
<dbReference type="InParanoid" id="Q96LZ2"/>
<dbReference type="OMA" id="RPRCTQD"/>
<dbReference type="OrthoDB" id="205198at2759"/>
<dbReference type="PAN-GO" id="Q96LZ2">
    <property type="GO annotations" value="2 GO annotations based on evolutionary models"/>
</dbReference>
<dbReference type="PhylomeDB" id="Q96LZ2"/>
<dbReference type="TreeFam" id="TF328505"/>
<dbReference type="PathwayCommons" id="Q96LZ2"/>
<dbReference type="SignaLink" id="Q96LZ2"/>
<dbReference type="BioGRID-ORCS" id="139422">
    <property type="hits" value="11 hits in 765 CRISPR screens"/>
</dbReference>
<dbReference type="GenomeRNAi" id="139422"/>
<dbReference type="Pharos" id="Q96LZ2">
    <property type="development level" value="Tdark"/>
</dbReference>
<dbReference type="PRO" id="PR:Q96LZ2"/>
<dbReference type="Proteomes" id="UP000005640">
    <property type="component" value="Chromosome X"/>
</dbReference>
<dbReference type="RNAct" id="Q96LZ2">
    <property type="molecule type" value="protein"/>
</dbReference>
<dbReference type="Bgee" id="ENSG00000177689">
    <property type="expression patterns" value="Expressed in primordial germ cell in gonad and 5 other cell types or tissues"/>
</dbReference>
<dbReference type="GO" id="GO:0005634">
    <property type="term" value="C:nucleus"/>
    <property type="evidence" value="ECO:0000318"/>
    <property type="project" value="GO_Central"/>
</dbReference>
<dbReference type="GO" id="GO:0000122">
    <property type="term" value="P:negative regulation of transcription by RNA polymerase II"/>
    <property type="evidence" value="ECO:0000318"/>
    <property type="project" value="GO_Central"/>
</dbReference>
<dbReference type="FunFam" id="1.10.10.1200:FF:000007">
    <property type="entry name" value="Melanoma-associated antigen C2"/>
    <property type="match status" value="1"/>
</dbReference>
<dbReference type="FunFam" id="1.10.10.1210:FF:000001">
    <property type="entry name" value="melanoma-associated antigen D1"/>
    <property type="match status" value="1"/>
</dbReference>
<dbReference type="Gene3D" id="1.10.10.1200">
    <property type="entry name" value="MAGE homology domain, winged helix WH1 motif"/>
    <property type="match status" value="1"/>
</dbReference>
<dbReference type="Gene3D" id="1.10.10.1210">
    <property type="entry name" value="MAGE homology domain, winged helix WH2 motif"/>
    <property type="match status" value="1"/>
</dbReference>
<dbReference type="InterPro" id="IPR037445">
    <property type="entry name" value="MAGE"/>
</dbReference>
<dbReference type="InterPro" id="IPR021072">
    <property type="entry name" value="MAGE_N"/>
</dbReference>
<dbReference type="InterPro" id="IPR041898">
    <property type="entry name" value="MAGE_WH1"/>
</dbReference>
<dbReference type="InterPro" id="IPR041899">
    <property type="entry name" value="MAGE_WH2"/>
</dbReference>
<dbReference type="InterPro" id="IPR002190">
    <property type="entry name" value="MHD_dom"/>
</dbReference>
<dbReference type="PANTHER" id="PTHR11736:SF157">
    <property type="entry name" value="MELANOMA-ASSOCIATED ANTIGEN B10"/>
    <property type="match status" value="1"/>
</dbReference>
<dbReference type="PANTHER" id="PTHR11736">
    <property type="entry name" value="MELANOMA-ASSOCIATED ANTIGEN MAGE ANTIGEN"/>
    <property type="match status" value="1"/>
</dbReference>
<dbReference type="Pfam" id="PF01454">
    <property type="entry name" value="MAGE"/>
    <property type="match status" value="1"/>
</dbReference>
<dbReference type="Pfam" id="PF12440">
    <property type="entry name" value="MAGE_N"/>
    <property type="match status" value="1"/>
</dbReference>
<dbReference type="SMART" id="SM01373">
    <property type="entry name" value="MAGE"/>
    <property type="match status" value="1"/>
</dbReference>
<dbReference type="SMART" id="SM01392">
    <property type="entry name" value="MAGE_N"/>
    <property type="match status" value="1"/>
</dbReference>
<dbReference type="PROSITE" id="PS50838">
    <property type="entry name" value="MAGE"/>
    <property type="match status" value="1"/>
</dbReference>
<organism>
    <name type="scientific">Homo sapiens</name>
    <name type="common">Human</name>
    <dbReference type="NCBI Taxonomy" id="9606"/>
    <lineage>
        <taxon>Eukaryota</taxon>
        <taxon>Metazoa</taxon>
        <taxon>Chordata</taxon>
        <taxon>Craniata</taxon>
        <taxon>Vertebrata</taxon>
        <taxon>Euteleostomi</taxon>
        <taxon>Mammalia</taxon>
        <taxon>Eutheria</taxon>
        <taxon>Euarchontoglires</taxon>
        <taxon>Primates</taxon>
        <taxon>Haplorrhini</taxon>
        <taxon>Catarrhini</taxon>
        <taxon>Hominidae</taxon>
        <taxon>Homo</taxon>
    </lineage>
</organism>
<protein>
    <recommendedName>
        <fullName>Melanoma-associated antigen B10</fullName>
    </recommendedName>
    <alternativeName>
        <fullName>MAGE-B10 antigen</fullName>
    </alternativeName>
</protein>
<comment type="interaction">
    <interactant intactId="EBI-3957156">
        <id>Q96LZ2</id>
    </interactant>
    <interactant intactId="EBI-3921347">
        <id>P51687</id>
        <label>SUOX</label>
    </interactant>
    <organismsDiffer>false</organismsDiffer>
    <experiments>5</experiments>
</comment>